<protein>
    <recommendedName>
        <fullName evidence="3">Pyrophosphate--fructose 6-phosphate 1-phosphotransferase</fullName>
        <ecNumber evidence="3">2.7.1.90</ecNumber>
    </recommendedName>
    <alternativeName>
        <fullName evidence="3">6-phosphofructokinase, pyrophosphate dependent</fullName>
    </alternativeName>
    <alternativeName>
        <fullName evidence="3">PPi-dependent phosphofructokinase</fullName>
        <shortName evidence="3">PPi-PFK</shortName>
    </alternativeName>
    <alternativeName>
        <fullName evidence="3">Pyrophosphate-dependent 6-phosphofructose-1-kinase</fullName>
    </alternativeName>
</protein>
<proteinExistence type="evidence at protein level"/>
<comment type="function">
    <text evidence="3 4">Catalyzes the phosphorylation of D-fructose 6-phosphate, the first committing step of glycolysis. Uses inorganic phosphate (PPi) as phosphoryl donor instead of ATP like common ATP-dependent phosphofructokinases (ATP-PFKs), which renders the reaction reversible, and can thus function both in glycolysis and gluconeogenesis. Consistently, PPi-PFK can replace the enzymes of both the forward (ATP-PFK) and reverse (fructose-bisphosphatase (FBPase)) reactions.</text>
</comment>
<comment type="catalytic activity">
    <reaction evidence="3 4">
        <text>beta-D-fructose 6-phosphate + diphosphate = beta-D-fructose 1,6-bisphosphate + phosphate + H(+)</text>
        <dbReference type="Rhea" id="RHEA:13613"/>
        <dbReference type="ChEBI" id="CHEBI:15378"/>
        <dbReference type="ChEBI" id="CHEBI:32966"/>
        <dbReference type="ChEBI" id="CHEBI:33019"/>
        <dbReference type="ChEBI" id="CHEBI:43474"/>
        <dbReference type="ChEBI" id="CHEBI:57634"/>
        <dbReference type="EC" id="2.7.1.90"/>
    </reaction>
</comment>
<comment type="cofactor">
    <cofactor evidence="1 3">
        <name>Mg(2+)</name>
        <dbReference type="ChEBI" id="CHEBI:18420"/>
    </cofactor>
</comment>
<comment type="activity regulation">
    <text evidence="2 3">Non-allosteric.</text>
</comment>
<comment type="biophysicochemical properties">
    <kinetics>
        <KM evidence="4">15 uM for diphosphate</KM>
        <KM evidence="4">109 uM for D-fructose 6-phosphate</KM>
    </kinetics>
    <phDependence>
        <text evidence="4">Optimum pH is 6.4-7.2.</text>
    </phDependence>
</comment>
<comment type="pathway">
    <text evidence="3">Carbohydrate degradation; glycolysis; D-glyceraldehyde 3-phosphate and glycerone phosphate from D-glucose: step 3/4.</text>
</comment>
<comment type="subunit">
    <text evidence="3 4 5">Homodimer.</text>
</comment>
<comment type="subcellular location">
    <subcellularLocation>
        <location evidence="1 3">Cytoplasm</location>
    </subcellularLocation>
</comment>
<comment type="similarity">
    <text evidence="3">Belongs to the phosphofructokinase type A (PFKA) family. PPi-dependent PFK group II subfamily. Clade 'Long' sub-subfamily.</text>
</comment>
<evidence type="ECO:0000250" key="1">
    <source>
        <dbReference type="UniProtKB" id="P0A796"/>
    </source>
</evidence>
<evidence type="ECO:0000250" key="2">
    <source>
        <dbReference type="UniProtKB" id="Q9EZ02"/>
    </source>
</evidence>
<evidence type="ECO:0000255" key="3">
    <source>
        <dbReference type="HAMAP-Rule" id="MF_01980"/>
    </source>
</evidence>
<evidence type="ECO:0000269" key="4">
    <source>
    </source>
</evidence>
<evidence type="ECO:0000269" key="5">
    <source ref="5"/>
</evidence>
<evidence type="ECO:0000305" key="6">
    <source>
    </source>
</evidence>
<evidence type="ECO:0007829" key="7">
    <source>
        <dbReference type="PDB" id="1KZH"/>
    </source>
</evidence>
<evidence type="ECO:0007829" key="8">
    <source>
        <dbReference type="PDB" id="2F48"/>
    </source>
</evidence>
<sequence>MNTSLFKQERQKYIPKLPNILKKDFNNISLVYGENTEAIQDRQALKEFFKNTYGLPIISFTEGESSLSFSKALNIGIILSGGPAPGGHNVISGVFDAIKKFNPNSKLFGFKGGPLGLLENDKIELTESLINSYRNTGGFDIVSSGRTKIETEEHYNKALFVAKENNLNAIIIIGGDDSNTNAAILAEYFKKNGENIQVIGVPKTIDADLRNDHIEISFGFDSATKIYSELIGNLCRDAMSTKKYWHFVKLMGRSASHVALECALKTHPNICIVSEEVLAKKKTLSEIIDEMVSVILKRSLNGDNFGVVIVPEGLIEFIPEVKSLMLELCDIFDKNEGEFKGLNIEKMKEIFVAKLSDYMKGVYLSLPLFIQFELIKSILERDPHGNFNVSRVPTEKLFIEMIQSRLNDMKKRGEYKGSFTPVDHFFGYEGRSAFPSNFDSDYCYSLGYNAVVLILNGLTGYMSCIKNLNLKPTDWIAGGVPLTMLMNMEERYGEKKPVIKKALVDLEGRPFKEFVKNRDKWALNNLYLYPGPVQYFGSSEIVDEITETLKLELLK</sequence>
<organism>
    <name type="scientific">Borreliella burgdorferi (strain ATCC 35210 / DSM 4680 / CIP 102532 / B31)</name>
    <name type="common">Borrelia burgdorferi</name>
    <dbReference type="NCBI Taxonomy" id="224326"/>
    <lineage>
        <taxon>Bacteria</taxon>
        <taxon>Pseudomonadati</taxon>
        <taxon>Spirochaetota</taxon>
        <taxon>Spirochaetia</taxon>
        <taxon>Spirochaetales</taxon>
        <taxon>Borreliaceae</taxon>
        <taxon>Borreliella</taxon>
    </lineage>
</organism>
<feature type="chain" id="PRO_0000428943" description="Pyrophosphate--fructose 6-phosphate 1-phosphotransferase">
    <location>
        <begin position="1"/>
        <end position="555"/>
    </location>
</feature>
<feature type="active site" description="Proton acceptor" evidence="1 3">
    <location>
        <position position="206"/>
    </location>
</feature>
<feature type="binding site" evidence="3 5">
    <location>
        <position position="82"/>
    </location>
    <ligand>
        <name>diphosphate</name>
        <dbReference type="ChEBI" id="CHEBI:33019"/>
    </ligand>
</feature>
<feature type="binding site" description="in other chain" evidence="5">
    <location>
        <position position="146"/>
    </location>
    <ligand>
        <name>substrate</name>
        <note>ligand shared between dimeric partners</note>
    </ligand>
</feature>
<feature type="binding site" evidence="1 3">
    <location>
        <position position="176"/>
    </location>
    <ligand>
        <name>Mg(2+)</name>
        <dbReference type="ChEBI" id="CHEBI:18420"/>
        <note>catalytic</note>
    </ligand>
</feature>
<feature type="binding site" description="in other chain" evidence="3 5">
    <location>
        <begin position="204"/>
        <end position="206"/>
    </location>
    <ligand>
        <name>substrate</name>
        <note>ligand shared between dimeric partners</note>
    </ligand>
</feature>
<feature type="binding site" evidence="3 5">
    <location>
        <begin position="243"/>
        <end position="244"/>
    </location>
    <ligand>
        <name>substrate</name>
        <note>ligand shared between dimeric partners</note>
    </ligand>
</feature>
<feature type="binding site" description="in other chain" evidence="3 5">
    <location>
        <begin position="251"/>
        <end position="253"/>
    </location>
    <ligand>
        <name>substrate</name>
        <note>ligand shared between dimeric partners</note>
    </ligand>
</feature>
<feature type="binding site" description="in other chain" evidence="3 5">
    <location>
        <position position="312"/>
    </location>
    <ligand>
        <name>substrate</name>
        <note>ligand shared between dimeric partners</note>
    </ligand>
</feature>
<feature type="binding site" description="in other chain" evidence="3 5">
    <location>
        <begin position="428"/>
        <end position="431"/>
    </location>
    <ligand>
        <name>substrate</name>
        <note>ligand shared between dimeric partners</note>
    </ligand>
</feature>
<feature type="site" description="Important for catalytic activity and substrate specificity; stabilizes the transition state when the phosphoryl donor is PPi; prevents ATP from binding by mimicking the alpha-phosphate group of ATP" evidence="3 6">
    <location>
        <position position="177"/>
    </location>
</feature>
<feature type="site" description="Important for catalytic activity; stabilizes the transition state when the phosphoryl donor is PPi" evidence="3 6">
    <location>
        <position position="203"/>
    </location>
</feature>
<feature type="helix" evidence="8">
    <location>
        <begin position="5"/>
        <end position="10"/>
    </location>
</feature>
<feature type="helix" evidence="8">
    <location>
        <begin position="19"/>
        <end position="22"/>
    </location>
</feature>
<feature type="helix" evidence="8">
    <location>
        <begin position="25"/>
        <end position="27"/>
    </location>
</feature>
<feature type="strand" evidence="8">
    <location>
        <begin position="28"/>
        <end position="32"/>
    </location>
</feature>
<feature type="helix" evidence="8">
    <location>
        <begin position="42"/>
        <end position="48"/>
    </location>
</feature>
<feature type="turn" evidence="8">
    <location>
        <begin position="49"/>
        <end position="54"/>
    </location>
</feature>
<feature type="strand" evidence="8">
    <location>
        <begin position="58"/>
        <end position="63"/>
    </location>
</feature>
<feature type="strand" evidence="8">
    <location>
        <begin position="74"/>
        <end position="82"/>
    </location>
</feature>
<feature type="helix" evidence="8">
    <location>
        <begin position="87"/>
        <end position="101"/>
    </location>
</feature>
<feature type="strand" evidence="8">
    <location>
        <begin position="106"/>
        <end position="110"/>
    </location>
</feature>
<feature type="turn" evidence="8">
    <location>
        <begin position="111"/>
        <end position="114"/>
    </location>
</feature>
<feature type="helix" evidence="8">
    <location>
        <begin position="115"/>
        <end position="118"/>
    </location>
</feature>
<feature type="strand" evidence="8">
    <location>
        <begin position="122"/>
        <end position="125"/>
    </location>
</feature>
<feature type="helix" evidence="8">
    <location>
        <begin position="127"/>
        <end position="133"/>
    </location>
</feature>
<feature type="turn" evidence="8">
    <location>
        <begin position="140"/>
        <end position="142"/>
    </location>
</feature>
<feature type="helix" evidence="8">
    <location>
        <begin position="152"/>
        <end position="164"/>
    </location>
</feature>
<feature type="strand" evidence="8">
    <location>
        <begin position="168"/>
        <end position="175"/>
    </location>
</feature>
<feature type="helix" evidence="8">
    <location>
        <begin position="176"/>
        <end position="191"/>
    </location>
</feature>
<feature type="strand" evidence="8">
    <location>
        <begin position="197"/>
        <end position="204"/>
    </location>
</feature>
<feature type="helix" evidence="8">
    <location>
        <begin position="220"/>
        <end position="241"/>
    </location>
</feature>
<feature type="strand" evidence="8">
    <location>
        <begin position="245"/>
        <end position="250"/>
    </location>
</feature>
<feature type="helix" evidence="8">
    <location>
        <begin position="257"/>
        <end position="266"/>
    </location>
</feature>
<feature type="strand" evidence="8">
    <location>
        <begin position="269"/>
        <end position="271"/>
    </location>
</feature>
<feature type="helix" evidence="8">
    <location>
        <begin position="274"/>
        <end position="279"/>
    </location>
</feature>
<feature type="helix" evidence="8">
    <location>
        <begin position="284"/>
        <end position="300"/>
    </location>
</feature>
<feature type="strand" evidence="8">
    <location>
        <begin position="306"/>
        <end position="311"/>
    </location>
</feature>
<feature type="helix" evidence="8">
    <location>
        <begin position="314"/>
        <end position="316"/>
    </location>
</feature>
<feature type="helix" evidence="8">
    <location>
        <begin position="319"/>
        <end position="334"/>
    </location>
</feature>
<feature type="helix" evidence="8">
    <location>
        <begin position="336"/>
        <end position="339"/>
    </location>
</feature>
<feature type="helix" evidence="8">
    <location>
        <begin position="344"/>
        <end position="354"/>
    </location>
</feature>
<feature type="helix" evidence="8">
    <location>
        <begin position="357"/>
        <end position="364"/>
    </location>
</feature>
<feature type="helix" evidence="8">
    <location>
        <begin position="368"/>
        <end position="379"/>
    </location>
</feature>
<feature type="helix" evidence="8">
    <location>
        <begin position="394"/>
        <end position="410"/>
    </location>
</feature>
<feature type="turn" evidence="8">
    <location>
        <begin position="411"/>
        <end position="413"/>
    </location>
</feature>
<feature type="strand" evidence="8">
    <location>
        <begin position="421"/>
        <end position="427"/>
    </location>
</feature>
<feature type="helix" evidence="8">
    <location>
        <begin position="428"/>
        <end position="431"/>
    </location>
</feature>
<feature type="helix" evidence="8">
    <location>
        <begin position="437"/>
        <end position="455"/>
    </location>
</feature>
<feature type="strand" evidence="8">
    <location>
        <begin position="460"/>
        <end position="466"/>
    </location>
</feature>
<feature type="helix" evidence="8">
    <location>
        <begin position="472"/>
        <end position="474"/>
    </location>
</feature>
<feature type="strand" evidence="8">
    <location>
        <begin position="476"/>
        <end position="481"/>
    </location>
</feature>
<feature type="helix" evidence="8">
    <location>
        <begin position="482"/>
        <end position="485"/>
    </location>
</feature>
<feature type="strand" evidence="8">
    <location>
        <begin position="486"/>
        <end position="491"/>
    </location>
</feature>
<feature type="strand" evidence="8">
    <location>
        <begin position="494"/>
        <end position="499"/>
    </location>
</feature>
<feature type="helix" evidence="8">
    <location>
        <begin position="509"/>
        <end position="523"/>
    </location>
</feature>
<feature type="strand" evidence="7">
    <location>
        <begin position="535"/>
        <end position="537"/>
    </location>
</feature>
<feature type="helix" evidence="8">
    <location>
        <begin position="539"/>
        <end position="542"/>
    </location>
</feature>
<feature type="helix" evidence="8">
    <location>
        <begin position="547"/>
        <end position="552"/>
    </location>
</feature>
<accession>P70826</accession>
<dbReference type="EC" id="2.7.1.90" evidence="3"/>
<dbReference type="EMBL" id="AJ224475">
    <property type="protein sequence ID" value="CAA11968.1"/>
    <property type="molecule type" value="Genomic_DNA"/>
</dbReference>
<dbReference type="EMBL" id="AE000783">
    <property type="status" value="NOT_ANNOTATED_CDS"/>
    <property type="molecule type" value="Genomic_DNA"/>
</dbReference>
<dbReference type="PIR" id="D70102">
    <property type="entry name" value="D70102"/>
</dbReference>
<dbReference type="PDB" id="1KZH">
    <property type="method" value="X-ray"/>
    <property type="resolution" value="2.55 A"/>
    <property type="chains" value="A/B=1-553"/>
</dbReference>
<dbReference type="PDB" id="2F48">
    <property type="method" value="X-ray"/>
    <property type="resolution" value="2.11 A"/>
    <property type="chains" value="A/B=1-553"/>
</dbReference>
<dbReference type="PDBsum" id="1KZH"/>
<dbReference type="PDBsum" id="2F48"/>
<dbReference type="SMR" id="P70826"/>
<dbReference type="BioCyc" id="MetaCyc:MONOMER-21288"/>
<dbReference type="SABIO-RK" id="P70826"/>
<dbReference type="UniPathway" id="UPA00109">
    <property type="reaction ID" value="UER00182"/>
</dbReference>
<dbReference type="EvolutionaryTrace" id="P70826"/>
<dbReference type="Proteomes" id="UP000001807">
    <property type="component" value="Chromosome"/>
</dbReference>
<dbReference type="GO" id="GO:0005829">
    <property type="term" value="C:cytosol"/>
    <property type="evidence" value="ECO:0000314"/>
    <property type="project" value="CAFA"/>
</dbReference>
<dbReference type="GO" id="GO:0003872">
    <property type="term" value="F:6-phosphofructokinase activity"/>
    <property type="evidence" value="ECO:0007669"/>
    <property type="project" value="UniProtKB-UniRule"/>
</dbReference>
<dbReference type="GO" id="GO:0005524">
    <property type="term" value="F:ATP binding"/>
    <property type="evidence" value="ECO:0007669"/>
    <property type="project" value="InterPro"/>
</dbReference>
<dbReference type="GO" id="GO:0047334">
    <property type="term" value="F:diphosphate-fructose-6-phosphate 1-phosphotransferase activity"/>
    <property type="evidence" value="ECO:0007669"/>
    <property type="project" value="UniProtKB-EC"/>
</dbReference>
<dbReference type="GO" id="GO:0046872">
    <property type="term" value="F:metal ion binding"/>
    <property type="evidence" value="ECO:0007669"/>
    <property type="project" value="UniProtKB-KW"/>
</dbReference>
<dbReference type="GO" id="GO:0006002">
    <property type="term" value="P:fructose 6-phosphate metabolic process"/>
    <property type="evidence" value="ECO:0007669"/>
    <property type="project" value="InterPro"/>
</dbReference>
<dbReference type="GO" id="GO:0009749">
    <property type="term" value="P:response to glucose"/>
    <property type="evidence" value="ECO:0007669"/>
    <property type="project" value="TreeGrafter"/>
</dbReference>
<dbReference type="CDD" id="cd00765">
    <property type="entry name" value="Pyrophosphate_PFK"/>
    <property type="match status" value="1"/>
</dbReference>
<dbReference type="Gene3D" id="3.40.50.450">
    <property type="match status" value="1"/>
</dbReference>
<dbReference type="Gene3D" id="3.40.50.460">
    <property type="entry name" value="Phosphofructokinase domain"/>
    <property type="match status" value="1"/>
</dbReference>
<dbReference type="Gene3D" id="1.10.10.480">
    <property type="entry name" value="Phosphofructokinase, domain 3"/>
    <property type="match status" value="1"/>
</dbReference>
<dbReference type="HAMAP" id="MF_01980">
    <property type="entry name" value="Phosphofructokinase_II_Long"/>
    <property type="match status" value="1"/>
</dbReference>
<dbReference type="InterPro" id="IPR022953">
    <property type="entry name" value="ATP_PFK"/>
</dbReference>
<dbReference type="InterPro" id="IPR011183">
    <property type="entry name" value="PfpB_PPi_PFK"/>
</dbReference>
<dbReference type="InterPro" id="IPR000023">
    <property type="entry name" value="Phosphofructokinase_dom"/>
</dbReference>
<dbReference type="InterPro" id="IPR035966">
    <property type="entry name" value="PKF_sf"/>
</dbReference>
<dbReference type="NCBIfam" id="TIGR02477">
    <property type="entry name" value="PFKA_PPi"/>
    <property type="match status" value="1"/>
</dbReference>
<dbReference type="NCBIfam" id="NF005482">
    <property type="entry name" value="PRK07085.1"/>
    <property type="match status" value="1"/>
</dbReference>
<dbReference type="PANTHER" id="PTHR43650">
    <property type="entry name" value="PYROPHOSPHATE--FRUCTOSE 6-PHOSPHATE 1-PHOSPHOTRANSFERASE"/>
    <property type="match status" value="1"/>
</dbReference>
<dbReference type="PANTHER" id="PTHR43650:SF1">
    <property type="entry name" value="PYROPHOSPHATE--FRUCTOSE 6-PHOSPHATE 1-PHOSPHOTRANSFERASE SUBUNIT BETA 2"/>
    <property type="match status" value="1"/>
</dbReference>
<dbReference type="Pfam" id="PF00365">
    <property type="entry name" value="PFK"/>
    <property type="match status" value="1"/>
</dbReference>
<dbReference type="PIRSF" id="PIRSF005677">
    <property type="entry name" value="PPi_PFK_PfpB"/>
    <property type="match status" value="1"/>
</dbReference>
<dbReference type="PRINTS" id="PR00476">
    <property type="entry name" value="PHFRCTKINASE"/>
</dbReference>
<dbReference type="SUPFAM" id="SSF53784">
    <property type="entry name" value="Phosphofructokinase"/>
    <property type="match status" value="1"/>
</dbReference>
<keyword id="KW-0002">3D-structure</keyword>
<keyword id="KW-0963">Cytoplasm</keyword>
<keyword id="KW-0324">Glycolysis</keyword>
<keyword id="KW-0418">Kinase</keyword>
<keyword id="KW-0460">Magnesium</keyword>
<keyword id="KW-0479">Metal-binding</keyword>
<keyword id="KW-1185">Reference proteome</keyword>
<keyword id="KW-0808">Transferase</keyword>
<name>PFP_BORBU</name>
<reference key="1">
    <citation type="journal article" date="1998" name="Res. Microbiol.">
        <title>Homologues of helicase genes priA and ruvAB of Borrelia burgdorferi, the Lyme borreliosis agent.</title>
        <authorList>
            <person name="Boursaux-Eude C."/>
            <person name="Margarita D."/>
            <person name="Belfaiza J."/>
            <person name="Old I.G."/>
            <person name="Saint-Girons I."/>
        </authorList>
    </citation>
    <scope>NUCLEOTIDE SEQUENCE [GENOMIC DNA]</scope>
    <source>
        <strain>HB19</strain>
    </source>
</reference>
<reference key="2">
    <citation type="journal article" date="1997" name="Nature">
        <title>Genomic sequence of a Lyme disease spirochaete, Borrelia burgdorferi.</title>
        <authorList>
            <person name="Fraser C.M."/>
            <person name="Casjens S."/>
            <person name="Huang W.M."/>
            <person name="Sutton G.G."/>
            <person name="Clayton R.A."/>
            <person name="Lathigra R."/>
            <person name="White O."/>
            <person name="Ketchum K.A."/>
            <person name="Dodson R.J."/>
            <person name="Hickey E.K."/>
            <person name="Gwinn M.L."/>
            <person name="Dougherty B.A."/>
            <person name="Tomb J.-F."/>
            <person name="Fleischmann R.D."/>
            <person name="Richardson D.L."/>
            <person name="Peterson J.D."/>
            <person name="Kerlavage A.R."/>
            <person name="Quackenbush J."/>
            <person name="Salzberg S.L."/>
            <person name="Hanson M."/>
            <person name="van Vugt R."/>
            <person name="Palmer N."/>
            <person name="Adams M.D."/>
            <person name="Gocayne J.D."/>
            <person name="Weidman J.F."/>
            <person name="Utterback T.R."/>
            <person name="Watthey L."/>
            <person name="McDonald L.A."/>
            <person name="Artiach P."/>
            <person name="Bowman C."/>
            <person name="Garland S.A."/>
            <person name="Fujii C."/>
            <person name="Cotton M.D."/>
            <person name="Horst K."/>
            <person name="Roberts K.M."/>
            <person name="Hatch B."/>
            <person name="Smith H.O."/>
            <person name="Venter J.C."/>
        </authorList>
    </citation>
    <scope>NUCLEOTIDE SEQUENCE [LARGE SCALE GENOMIC DNA]</scope>
    <source>
        <strain>ATCC 35210 / DSM 4680 / CIP 102532 / B31</strain>
    </source>
</reference>
<reference key="3">
    <citation type="journal article" date="1999" name="Arch. Biochem. Biophys.">
        <title>Expression, characterization, and crystallization of the pyrophosphate-dependent phosphofructo-1-kinase of Borrelia burgdorferi.</title>
        <authorList>
            <person name="Deng Z."/>
            <person name="Roberts D."/>
            <person name="Wang X."/>
            <person name="Kemp R.G."/>
        </authorList>
    </citation>
    <scope>FUNCTION</scope>
    <scope>CATALYTIC ACTIVITY</scope>
    <scope>BIOPHYSICOCHEMICAL PROPERTIES</scope>
    <scope>SUBUNIT</scope>
</reference>
<reference key="4">
    <citation type="journal article" date="2002" name="Structure">
        <title>The structure of a pyrophosphate-dependent phosphofructokinase from the Lyme disease spirochete Borrelia burgdorferi.</title>
        <authorList>
            <person name="Moore S.A."/>
            <person name="Ronimus R.S."/>
            <person name="Roberson R.S."/>
            <person name="Morgan H.W."/>
        </authorList>
    </citation>
    <scope>X-RAY CRYSTALLOGRAPHY (2.55 ANGSTROMS) OF 1-553</scope>
</reference>
<reference key="5">
    <citation type="submission" date="2005-11" db="PDB data bank">
        <title>Crystal structure of a novel fructose 1,6-bisphosphate and AlF(3) containing pyrophosphate-dependent phosphofructo-1-kinase complex from Borrelia burgdorferi.</title>
        <authorList>
            <person name="Wang M."/>
            <person name="Grum-Tokars V."/>
        </authorList>
    </citation>
    <scope>X-RAY CRYSTALLOGRAPHY (2.11 ANGSTROMS) OF 1-553 IN COMPLEX WITH SUBSTRATE</scope>
    <source>
        <strain>ATCC 35210 / DSM 4680 / CIP 102532 / B31</strain>
    </source>
</reference>
<gene>
    <name evidence="3" type="primary">pfp</name>
    <name type="synonym">PFK2</name>
    <name type="synonym">pfpB</name>
    <name type="ordered locus">BB_0020</name>
</gene>